<reference key="1">
    <citation type="journal article" date="2008" name="Proc. Natl. Acad. Sci. U.S.A.">
        <title>Nitrogen fixation island and rhizosphere competence traits in the genome of root-associated Pseudomonas stutzeri A1501.</title>
        <authorList>
            <person name="Yan Y."/>
            <person name="Yang J."/>
            <person name="Dou Y."/>
            <person name="Chen M."/>
            <person name="Ping S."/>
            <person name="Peng J."/>
            <person name="Lu W."/>
            <person name="Zhang W."/>
            <person name="Yao Z."/>
            <person name="Li H."/>
            <person name="Liu W."/>
            <person name="He S."/>
            <person name="Geng L."/>
            <person name="Zhang X."/>
            <person name="Yang F."/>
            <person name="Yu H."/>
            <person name="Zhan Y."/>
            <person name="Li D."/>
            <person name="Lin Z."/>
            <person name="Wang Y."/>
            <person name="Elmerich C."/>
            <person name="Lin M."/>
            <person name="Jin Q."/>
        </authorList>
    </citation>
    <scope>NUCLEOTIDE SEQUENCE [LARGE SCALE GENOMIC DNA]</scope>
    <source>
        <strain>A1501</strain>
    </source>
</reference>
<sequence>MKTLTQLHFDNRFARLGDTFSTQVSPQPLEAPRLVVASEAAMALLDLDPAEAEQALFAELFSGHKIWSTAEPRAMVYSGHQFGSYNPQLGDGRGLLLGEVVNEAGEYWDLHLKGAGKTPYSRMGDGRAVLRSSIREFLASEHLHALGIPSSRALCVTGSDTLVYRERPERGAMLLRLAPSHVRFGHFEFFYYTRQHGELKQLLEHVIEVHFPELLEHPEPFHMFFRTVLERTAALIARWQAYGFCHGVMNTDNMSILGITFDFGPYAFLDDFDARFICNHSDDTGRYSFENQVPIAHWNLAALAQALTPFVEVKVLRETMELFLPLYEAEWLDLMRRRLGFSQAEDGDAELIRRLLQLMQGSAVDYTRFFRELGERPAEQAVQRLREDFIDLQGFDAWAADYCARSAREGGDPVARQARMHAVNPKYILRNYLAQQAIEAAEKGDYAPVRELHAVLSRPFDEQPGMERYAERPPEWGKHLEISCSS</sequence>
<accession>A4VRA3</accession>
<gene>
    <name evidence="1" type="primary">ydiU</name>
    <name evidence="1" type="synonym">selO</name>
    <name type="ordered locus">PST_3881</name>
</gene>
<feature type="chain" id="PRO_1000045253" description="Protein nucleotidyltransferase YdiU">
    <location>
        <begin position="1"/>
        <end position="486"/>
    </location>
</feature>
<feature type="active site" description="Proton acceptor" evidence="1">
    <location>
        <position position="252"/>
    </location>
</feature>
<feature type="binding site" evidence="1">
    <location>
        <position position="90"/>
    </location>
    <ligand>
        <name>ATP</name>
        <dbReference type="ChEBI" id="CHEBI:30616"/>
    </ligand>
</feature>
<feature type="binding site" evidence="1">
    <location>
        <position position="92"/>
    </location>
    <ligand>
        <name>ATP</name>
        <dbReference type="ChEBI" id="CHEBI:30616"/>
    </ligand>
</feature>
<feature type="binding site" evidence="1">
    <location>
        <position position="93"/>
    </location>
    <ligand>
        <name>ATP</name>
        <dbReference type="ChEBI" id="CHEBI:30616"/>
    </ligand>
</feature>
<feature type="binding site" evidence="1">
    <location>
        <position position="113"/>
    </location>
    <ligand>
        <name>ATP</name>
        <dbReference type="ChEBI" id="CHEBI:30616"/>
    </ligand>
</feature>
<feature type="binding site" evidence="1">
    <location>
        <position position="125"/>
    </location>
    <ligand>
        <name>ATP</name>
        <dbReference type="ChEBI" id="CHEBI:30616"/>
    </ligand>
</feature>
<feature type="binding site" evidence="1">
    <location>
        <position position="126"/>
    </location>
    <ligand>
        <name>ATP</name>
        <dbReference type="ChEBI" id="CHEBI:30616"/>
    </ligand>
</feature>
<feature type="binding site" evidence="1">
    <location>
        <position position="176"/>
    </location>
    <ligand>
        <name>ATP</name>
        <dbReference type="ChEBI" id="CHEBI:30616"/>
    </ligand>
</feature>
<feature type="binding site" evidence="1">
    <location>
        <position position="183"/>
    </location>
    <ligand>
        <name>ATP</name>
        <dbReference type="ChEBI" id="CHEBI:30616"/>
    </ligand>
</feature>
<feature type="binding site" evidence="1">
    <location>
        <position position="253"/>
    </location>
    <ligand>
        <name>Mg(2+)</name>
        <dbReference type="ChEBI" id="CHEBI:18420"/>
    </ligand>
</feature>
<feature type="binding site" evidence="1">
    <location>
        <position position="262"/>
    </location>
    <ligand>
        <name>ATP</name>
        <dbReference type="ChEBI" id="CHEBI:30616"/>
    </ligand>
</feature>
<feature type="binding site" evidence="1">
    <location>
        <position position="262"/>
    </location>
    <ligand>
        <name>Mg(2+)</name>
        <dbReference type="ChEBI" id="CHEBI:18420"/>
    </ligand>
</feature>
<name>SELO_STUS1</name>
<organism>
    <name type="scientific">Stutzerimonas stutzeri (strain A1501)</name>
    <name type="common">Pseudomonas stutzeri</name>
    <dbReference type="NCBI Taxonomy" id="379731"/>
    <lineage>
        <taxon>Bacteria</taxon>
        <taxon>Pseudomonadati</taxon>
        <taxon>Pseudomonadota</taxon>
        <taxon>Gammaproteobacteria</taxon>
        <taxon>Pseudomonadales</taxon>
        <taxon>Pseudomonadaceae</taxon>
        <taxon>Stutzerimonas</taxon>
    </lineage>
</organism>
<dbReference type="EC" id="2.7.7.-" evidence="1"/>
<dbReference type="EC" id="2.7.7.108" evidence="1"/>
<dbReference type="EMBL" id="CP000304">
    <property type="protein sequence ID" value="ABP81504.1"/>
    <property type="molecule type" value="Genomic_DNA"/>
</dbReference>
<dbReference type="RefSeq" id="WP_011914889.1">
    <property type="nucleotide sequence ID" value="NC_009434.1"/>
</dbReference>
<dbReference type="SMR" id="A4VRA3"/>
<dbReference type="KEGG" id="psa:PST_3881"/>
<dbReference type="eggNOG" id="COG0397">
    <property type="taxonomic scope" value="Bacteria"/>
</dbReference>
<dbReference type="HOGENOM" id="CLU_010245_4_0_6"/>
<dbReference type="Proteomes" id="UP000000233">
    <property type="component" value="Chromosome"/>
</dbReference>
<dbReference type="GO" id="GO:0070733">
    <property type="term" value="F:AMPylase activity"/>
    <property type="evidence" value="ECO:0007669"/>
    <property type="project" value="RHEA"/>
</dbReference>
<dbReference type="GO" id="GO:0005524">
    <property type="term" value="F:ATP binding"/>
    <property type="evidence" value="ECO:0007669"/>
    <property type="project" value="UniProtKB-UniRule"/>
</dbReference>
<dbReference type="GO" id="GO:0000287">
    <property type="term" value="F:magnesium ion binding"/>
    <property type="evidence" value="ECO:0007669"/>
    <property type="project" value="UniProtKB-UniRule"/>
</dbReference>
<dbReference type="HAMAP" id="MF_00692">
    <property type="entry name" value="YdiU_SelO"/>
    <property type="match status" value="1"/>
</dbReference>
<dbReference type="InterPro" id="IPR003846">
    <property type="entry name" value="SelO"/>
</dbReference>
<dbReference type="NCBIfam" id="NF000658">
    <property type="entry name" value="PRK00029.1"/>
    <property type="match status" value="1"/>
</dbReference>
<dbReference type="NCBIfam" id="NF045949">
    <property type="entry name" value="PrtAdtaseSelOPseudom"/>
    <property type="match status" value="1"/>
</dbReference>
<dbReference type="PANTHER" id="PTHR32057">
    <property type="entry name" value="PROTEIN ADENYLYLTRANSFERASE SELO, MITOCHONDRIAL"/>
    <property type="match status" value="1"/>
</dbReference>
<dbReference type="PANTHER" id="PTHR32057:SF14">
    <property type="entry name" value="PROTEIN ADENYLYLTRANSFERASE SELO, MITOCHONDRIAL"/>
    <property type="match status" value="1"/>
</dbReference>
<dbReference type="Pfam" id="PF02696">
    <property type="entry name" value="SelO"/>
    <property type="match status" value="1"/>
</dbReference>
<proteinExistence type="inferred from homology"/>
<keyword id="KW-0067">ATP-binding</keyword>
<keyword id="KW-0460">Magnesium</keyword>
<keyword id="KW-0464">Manganese</keyword>
<keyword id="KW-0479">Metal-binding</keyword>
<keyword id="KW-0547">Nucleotide-binding</keyword>
<keyword id="KW-0548">Nucleotidyltransferase</keyword>
<keyword id="KW-1185">Reference proteome</keyword>
<keyword id="KW-0808">Transferase</keyword>
<evidence type="ECO:0000255" key="1">
    <source>
        <dbReference type="HAMAP-Rule" id="MF_00692"/>
    </source>
</evidence>
<protein>
    <recommendedName>
        <fullName evidence="1">Protein nucleotidyltransferase YdiU</fullName>
        <ecNumber evidence="1">2.7.7.-</ecNumber>
    </recommendedName>
    <alternativeName>
        <fullName evidence="1">Protein adenylyltransferase YdiU</fullName>
        <ecNumber evidence="1">2.7.7.108</ecNumber>
    </alternativeName>
    <alternativeName>
        <fullName evidence="1">Protein uridylyltransferase YdiU</fullName>
        <ecNumber evidence="1">2.7.7.-</ecNumber>
    </alternativeName>
</protein>
<comment type="function">
    <text evidence="1">Nucleotidyltransferase involved in the post-translational modification of proteins. It can catalyze the addition of adenosine monophosphate (AMP) or uridine monophosphate (UMP) to a protein, resulting in modifications known as AMPylation and UMPylation.</text>
</comment>
<comment type="catalytic activity">
    <reaction evidence="1">
        <text>L-seryl-[protein] + ATP = 3-O-(5'-adenylyl)-L-seryl-[protein] + diphosphate</text>
        <dbReference type="Rhea" id="RHEA:58120"/>
        <dbReference type="Rhea" id="RHEA-COMP:9863"/>
        <dbReference type="Rhea" id="RHEA-COMP:15073"/>
        <dbReference type="ChEBI" id="CHEBI:29999"/>
        <dbReference type="ChEBI" id="CHEBI:30616"/>
        <dbReference type="ChEBI" id="CHEBI:33019"/>
        <dbReference type="ChEBI" id="CHEBI:142516"/>
        <dbReference type="EC" id="2.7.7.108"/>
    </reaction>
</comment>
<comment type="catalytic activity">
    <reaction evidence="1">
        <text>L-threonyl-[protein] + ATP = 3-O-(5'-adenylyl)-L-threonyl-[protein] + diphosphate</text>
        <dbReference type="Rhea" id="RHEA:54292"/>
        <dbReference type="Rhea" id="RHEA-COMP:11060"/>
        <dbReference type="Rhea" id="RHEA-COMP:13847"/>
        <dbReference type="ChEBI" id="CHEBI:30013"/>
        <dbReference type="ChEBI" id="CHEBI:30616"/>
        <dbReference type="ChEBI" id="CHEBI:33019"/>
        <dbReference type="ChEBI" id="CHEBI:138113"/>
        <dbReference type="EC" id="2.7.7.108"/>
    </reaction>
</comment>
<comment type="catalytic activity">
    <reaction evidence="1">
        <text>L-tyrosyl-[protein] + ATP = O-(5'-adenylyl)-L-tyrosyl-[protein] + diphosphate</text>
        <dbReference type="Rhea" id="RHEA:54288"/>
        <dbReference type="Rhea" id="RHEA-COMP:10136"/>
        <dbReference type="Rhea" id="RHEA-COMP:13846"/>
        <dbReference type="ChEBI" id="CHEBI:30616"/>
        <dbReference type="ChEBI" id="CHEBI:33019"/>
        <dbReference type="ChEBI" id="CHEBI:46858"/>
        <dbReference type="ChEBI" id="CHEBI:83624"/>
        <dbReference type="EC" id="2.7.7.108"/>
    </reaction>
</comment>
<comment type="catalytic activity">
    <reaction evidence="1">
        <text>L-histidyl-[protein] + UTP = N(tele)-(5'-uridylyl)-L-histidyl-[protein] + diphosphate</text>
        <dbReference type="Rhea" id="RHEA:83891"/>
        <dbReference type="Rhea" id="RHEA-COMP:9745"/>
        <dbReference type="Rhea" id="RHEA-COMP:20239"/>
        <dbReference type="ChEBI" id="CHEBI:29979"/>
        <dbReference type="ChEBI" id="CHEBI:33019"/>
        <dbReference type="ChEBI" id="CHEBI:46398"/>
        <dbReference type="ChEBI" id="CHEBI:233474"/>
    </reaction>
</comment>
<comment type="catalytic activity">
    <reaction evidence="1">
        <text>L-seryl-[protein] + UTP = O-(5'-uridylyl)-L-seryl-[protein] + diphosphate</text>
        <dbReference type="Rhea" id="RHEA:64604"/>
        <dbReference type="Rhea" id="RHEA-COMP:9863"/>
        <dbReference type="Rhea" id="RHEA-COMP:16635"/>
        <dbReference type="ChEBI" id="CHEBI:29999"/>
        <dbReference type="ChEBI" id="CHEBI:33019"/>
        <dbReference type="ChEBI" id="CHEBI:46398"/>
        <dbReference type="ChEBI" id="CHEBI:156051"/>
    </reaction>
</comment>
<comment type="catalytic activity">
    <reaction evidence="1">
        <text>L-tyrosyl-[protein] + UTP = O-(5'-uridylyl)-L-tyrosyl-[protein] + diphosphate</text>
        <dbReference type="Rhea" id="RHEA:83887"/>
        <dbReference type="Rhea" id="RHEA-COMP:10136"/>
        <dbReference type="Rhea" id="RHEA-COMP:20238"/>
        <dbReference type="ChEBI" id="CHEBI:33019"/>
        <dbReference type="ChEBI" id="CHEBI:46398"/>
        <dbReference type="ChEBI" id="CHEBI:46858"/>
        <dbReference type="ChEBI" id="CHEBI:90602"/>
    </reaction>
</comment>
<comment type="cofactor">
    <cofactor evidence="1">
        <name>Mg(2+)</name>
        <dbReference type="ChEBI" id="CHEBI:18420"/>
    </cofactor>
    <cofactor evidence="1">
        <name>Mn(2+)</name>
        <dbReference type="ChEBI" id="CHEBI:29035"/>
    </cofactor>
</comment>
<comment type="similarity">
    <text evidence="1">Belongs to the SELO family.</text>
</comment>